<organism>
    <name type="scientific">Neisseria meningitidis serogroup C / serotype 2a (strain ATCC 700532 / DSM 15464 / FAM18)</name>
    <dbReference type="NCBI Taxonomy" id="272831"/>
    <lineage>
        <taxon>Bacteria</taxon>
        <taxon>Pseudomonadati</taxon>
        <taxon>Pseudomonadota</taxon>
        <taxon>Betaproteobacteria</taxon>
        <taxon>Neisseriales</taxon>
        <taxon>Neisseriaceae</taxon>
        <taxon>Neisseria</taxon>
    </lineage>
</organism>
<evidence type="ECO:0000255" key="1">
    <source>
        <dbReference type="HAMAP-Rule" id="MF_00149"/>
    </source>
</evidence>
<evidence type="ECO:0000256" key="2">
    <source>
        <dbReference type="SAM" id="MobiDB-lite"/>
    </source>
</evidence>
<name>MUTL_NEIMF</name>
<keyword id="KW-0227">DNA damage</keyword>
<keyword id="KW-0234">DNA repair</keyword>
<gene>
    <name evidence="1" type="primary">mutL</name>
    <name type="ordered locus">NMC1378</name>
</gene>
<reference key="1">
    <citation type="journal article" date="2007" name="PLoS Genet.">
        <title>Meningococcal genetic variation mechanisms viewed through comparative analysis of serogroup C strain FAM18.</title>
        <authorList>
            <person name="Bentley S.D."/>
            <person name="Vernikos G.S."/>
            <person name="Snyder L.A.S."/>
            <person name="Churcher C."/>
            <person name="Arrowsmith C."/>
            <person name="Chillingworth T."/>
            <person name="Cronin A."/>
            <person name="Davis P.H."/>
            <person name="Holroyd N.E."/>
            <person name="Jagels K."/>
            <person name="Maddison M."/>
            <person name="Moule S."/>
            <person name="Rabbinowitsch E."/>
            <person name="Sharp S."/>
            <person name="Unwin L."/>
            <person name="Whitehead S."/>
            <person name="Quail M.A."/>
            <person name="Achtman M."/>
            <person name="Barrell B.G."/>
            <person name="Saunders N.J."/>
            <person name="Parkhill J."/>
        </authorList>
    </citation>
    <scope>NUCLEOTIDE SEQUENCE [LARGE SCALE GENOMIC DNA]</scope>
    <source>
        <strain>ATCC 700532 / DSM 15464 / FAM18</strain>
    </source>
</reference>
<dbReference type="EMBL" id="AM421808">
    <property type="protein sequence ID" value="CAM10594.1"/>
    <property type="molecule type" value="Genomic_DNA"/>
</dbReference>
<dbReference type="RefSeq" id="WP_002220766.1">
    <property type="nucleotide sequence ID" value="NC_008767.1"/>
</dbReference>
<dbReference type="SMR" id="A1KUP6"/>
<dbReference type="KEGG" id="nmc:NMC1378"/>
<dbReference type="HOGENOM" id="CLU_004131_4_2_4"/>
<dbReference type="Proteomes" id="UP000002286">
    <property type="component" value="Chromosome"/>
</dbReference>
<dbReference type="GO" id="GO:0032300">
    <property type="term" value="C:mismatch repair complex"/>
    <property type="evidence" value="ECO:0007669"/>
    <property type="project" value="InterPro"/>
</dbReference>
<dbReference type="GO" id="GO:0005524">
    <property type="term" value="F:ATP binding"/>
    <property type="evidence" value="ECO:0007669"/>
    <property type="project" value="InterPro"/>
</dbReference>
<dbReference type="GO" id="GO:0016887">
    <property type="term" value="F:ATP hydrolysis activity"/>
    <property type="evidence" value="ECO:0007669"/>
    <property type="project" value="InterPro"/>
</dbReference>
<dbReference type="GO" id="GO:0140664">
    <property type="term" value="F:ATP-dependent DNA damage sensor activity"/>
    <property type="evidence" value="ECO:0007669"/>
    <property type="project" value="InterPro"/>
</dbReference>
<dbReference type="GO" id="GO:0030983">
    <property type="term" value="F:mismatched DNA binding"/>
    <property type="evidence" value="ECO:0007669"/>
    <property type="project" value="InterPro"/>
</dbReference>
<dbReference type="GO" id="GO:0006298">
    <property type="term" value="P:mismatch repair"/>
    <property type="evidence" value="ECO:0007669"/>
    <property type="project" value="UniProtKB-UniRule"/>
</dbReference>
<dbReference type="CDD" id="cd16926">
    <property type="entry name" value="HATPase_MutL-MLH-PMS-like"/>
    <property type="match status" value="1"/>
</dbReference>
<dbReference type="CDD" id="cd03482">
    <property type="entry name" value="MutL_Trans_MutL"/>
    <property type="match status" value="1"/>
</dbReference>
<dbReference type="FunFam" id="3.30.230.10:FF:000013">
    <property type="entry name" value="DNA mismatch repair endonuclease MutL"/>
    <property type="match status" value="1"/>
</dbReference>
<dbReference type="FunFam" id="3.30.565.10:FF:000003">
    <property type="entry name" value="DNA mismatch repair endonuclease MutL"/>
    <property type="match status" value="1"/>
</dbReference>
<dbReference type="Gene3D" id="3.30.230.10">
    <property type="match status" value="1"/>
</dbReference>
<dbReference type="Gene3D" id="3.30.565.10">
    <property type="entry name" value="Histidine kinase-like ATPase, C-terminal domain"/>
    <property type="match status" value="1"/>
</dbReference>
<dbReference type="Gene3D" id="3.30.1540.20">
    <property type="entry name" value="MutL, C-terminal domain, dimerisation subdomain"/>
    <property type="match status" value="1"/>
</dbReference>
<dbReference type="Gene3D" id="3.30.1370.100">
    <property type="entry name" value="MutL, C-terminal domain, regulatory subdomain"/>
    <property type="match status" value="1"/>
</dbReference>
<dbReference type="HAMAP" id="MF_00149">
    <property type="entry name" value="DNA_mis_repair"/>
    <property type="match status" value="1"/>
</dbReference>
<dbReference type="InterPro" id="IPR014762">
    <property type="entry name" value="DNA_mismatch_repair_CS"/>
</dbReference>
<dbReference type="InterPro" id="IPR020667">
    <property type="entry name" value="DNA_mismatch_repair_MutL"/>
</dbReference>
<dbReference type="InterPro" id="IPR013507">
    <property type="entry name" value="DNA_mismatch_S5_2-like"/>
</dbReference>
<dbReference type="InterPro" id="IPR036890">
    <property type="entry name" value="HATPase_C_sf"/>
</dbReference>
<dbReference type="InterPro" id="IPR002099">
    <property type="entry name" value="MutL/Mlh/PMS"/>
</dbReference>
<dbReference type="InterPro" id="IPR038973">
    <property type="entry name" value="MutL/Mlh/Pms-like"/>
</dbReference>
<dbReference type="InterPro" id="IPR014790">
    <property type="entry name" value="MutL_C"/>
</dbReference>
<dbReference type="InterPro" id="IPR042120">
    <property type="entry name" value="MutL_C_dimsub"/>
</dbReference>
<dbReference type="InterPro" id="IPR042121">
    <property type="entry name" value="MutL_C_regsub"/>
</dbReference>
<dbReference type="InterPro" id="IPR037198">
    <property type="entry name" value="MutL_C_sf"/>
</dbReference>
<dbReference type="InterPro" id="IPR020568">
    <property type="entry name" value="Ribosomal_Su5_D2-typ_SF"/>
</dbReference>
<dbReference type="InterPro" id="IPR014721">
    <property type="entry name" value="Ribsml_uS5_D2-typ_fold_subgr"/>
</dbReference>
<dbReference type="NCBIfam" id="TIGR00585">
    <property type="entry name" value="mutl"/>
    <property type="match status" value="1"/>
</dbReference>
<dbReference type="NCBIfam" id="NF000949">
    <property type="entry name" value="PRK00095.1-2"/>
    <property type="match status" value="1"/>
</dbReference>
<dbReference type="PANTHER" id="PTHR10073">
    <property type="entry name" value="DNA MISMATCH REPAIR PROTEIN MLH, PMS, MUTL"/>
    <property type="match status" value="1"/>
</dbReference>
<dbReference type="PANTHER" id="PTHR10073:SF12">
    <property type="entry name" value="DNA MISMATCH REPAIR PROTEIN MLH1"/>
    <property type="match status" value="1"/>
</dbReference>
<dbReference type="Pfam" id="PF01119">
    <property type="entry name" value="DNA_mis_repair"/>
    <property type="match status" value="1"/>
</dbReference>
<dbReference type="Pfam" id="PF13589">
    <property type="entry name" value="HATPase_c_3"/>
    <property type="match status" value="1"/>
</dbReference>
<dbReference type="Pfam" id="PF08676">
    <property type="entry name" value="MutL_C"/>
    <property type="match status" value="1"/>
</dbReference>
<dbReference type="SMART" id="SM01340">
    <property type="entry name" value="DNA_mis_repair"/>
    <property type="match status" value="1"/>
</dbReference>
<dbReference type="SMART" id="SM00853">
    <property type="entry name" value="MutL_C"/>
    <property type="match status" value="1"/>
</dbReference>
<dbReference type="SUPFAM" id="SSF55874">
    <property type="entry name" value="ATPase domain of HSP90 chaperone/DNA topoisomerase II/histidine kinase"/>
    <property type="match status" value="1"/>
</dbReference>
<dbReference type="SUPFAM" id="SSF118116">
    <property type="entry name" value="DNA mismatch repair protein MutL"/>
    <property type="match status" value="1"/>
</dbReference>
<dbReference type="SUPFAM" id="SSF54211">
    <property type="entry name" value="Ribosomal protein S5 domain 2-like"/>
    <property type="match status" value="1"/>
</dbReference>
<dbReference type="PROSITE" id="PS00058">
    <property type="entry name" value="DNA_MISMATCH_REPAIR_1"/>
    <property type="match status" value="1"/>
</dbReference>
<sequence>MSRIAALPDHLVNQIAAGEVVERPANALKEIVENSIDAGATAIDVELAGGGIRLIRVSDNGGGIHPDDIELALHRHATSKIKTLNDLEHVASMGFRGEGLASIASVSRLTLTSRQEDSSHATQVKAEDGKLSSPTAAAHPVGTTIEAAELFFNTPARRKFLKSEATEYAHCATMLERLALAHPHIAFSLKRDGKQVFKLPAQSLHERIAAIVGDDFQTASLEIDSDNGALRLYGAIAKPTFAKGKTDKQYCFVNHRFVRDKVMLHAVKQAYRDVLHNALTPAFVLFLDLPPEAVDVNVHPTKTEIRFRDSQQVHQLVFHTLNKALADTRADLTESVSNAGEVLHDITGVTPAPMPSENNSENLFDRASNYPTGNKSDTHNAFGSSGKTAPMPYQSAYAPQQRSLSLRESRAAMNTYAELYKKTDDIDLELSRFEQARFGNMPSETPAPQTDTPLSDGIPSPSELPPLGFAIAQLLGIYILAQAEDSLLLIDMHAAAERVNYEKMKRQRQENGNLQSQRLLIPVTFAASHEECAALADHAEALAGFGLELSDMGGNTLAVRAAPAMLGKSDVVSLARDVLNEFAQVGSSQTIEEHENHILATMSCHGSIRAGRRLTLPEMNALLRDMENTPRSNQCNHGRPTWVKLTLKELDALFLRGQ</sequence>
<protein>
    <recommendedName>
        <fullName evidence="1">DNA mismatch repair protein MutL</fullName>
    </recommendedName>
</protein>
<comment type="function">
    <text evidence="1">This protein is involved in the repair of mismatches in DNA. It is required for dam-dependent methyl-directed DNA mismatch repair. May act as a 'molecular matchmaker', a protein that promotes the formation of a stable complex between two or more DNA-binding proteins in an ATP-dependent manner without itself being part of a final effector complex.</text>
</comment>
<comment type="similarity">
    <text evidence="1">Belongs to the DNA mismatch repair MutL/HexB family.</text>
</comment>
<feature type="chain" id="PRO_1000010047" description="DNA mismatch repair protein MutL">
    <location>
        <begin position="1"/>
        <end position="658"/>
    </location>
</feature>
<feature type="region of interest" description="Disordered" evidence="2">
    <location>
        <begin position="114"/>
        <end position="137"/>
    </location>
</feature>
<feature type="compositionally biased region" description="Basic and acidic residues" evidence="2">
    <location>
        <begin position="114"/>
        <end position="130"/>
    </location>
</feature>
<proteinExistence type="inferred from homology"/>
<accession>A1KUP6</accession>